<feature type="chain" id="PRO_0000230787" description="Kinesin light chain 3">
    <location>
        <begin position="1"/>
        <end position="504"/>
    </location>
</feature>
<feature type="repeat" description="TPR 1">
    <location>
        <begin position="207"/>
        <end position="240"/>
    </location>
</feature>
<feature type="repeat" description="TPR 2">
    <location>
        <begin position="249"/>
        <end position="282"/>
    </location>
</feature>
<feature type="repeat" description="TPR 3">
    <location>
        <begin position="291"/>
        <end position="324"/>
    </location>
</feature>
<feature type="repeat" description="TPR 4">
    <location>
        <begin position="333"/>
        <end position="366"/>
    </location>
</feature>
<feature type="repeat" description="TPR 5">
    <location>
        <begin position="375"/>
        <end position="408"/>
    </location>
</feature>
<feature type="region of interest" description="Disordered" evidence="5">
    <location>
        <begin position="153"/>
        <end position="197"/>
    </location>
</feature>
<feature type="region of interest" description="Disordered" evidence="5">
    <location>
        <begin position="411"/>
        <end position="438"/>
    </location>
</feature>
<feature type="coiled-coil region" evidence="4">
    <location>
        <begin position="90"/>
        <end position="150"/>
    </location>
</feature>
<feature type="compositionally biased region" description="Low complexity" evidence="5">
    <location>
        <begin position="158"/>
        <end position="167"/>
    </location>
</feature>
<feature type="modified residue" description="Phosphoserine" evidence="3">
    <location>
        <position position="173"/>
    </location>
</feature>
<feature type="modified residue" description="Phosphoserine" evidence="2">
    <location>
        <position position="466"/>
    </location>
</feature>
<feature type="modified residue" description="Phosphothreonine" evidence="2">
    <location>
        <position position="498"/>
    </location>
</feature>
<feature type="modified residue" description="Phosphoserine" evidence="2">
    <location>
        <position position="502"/>
    </location>
</feature>
<reference key="1">
    <citation type="submission" date="2004-11" db="EMBL/GenBank/DDBJ databases">
        <authorList>
            <consortium name="The German cDNA consortium"/>
        </authorList>
    </citation>
    <scope>NUCLEOTIDE SEQUENCE [LARGE SCALE MRNA]</scope>
    <source>
        <tissue>Kidney</tissue>
    </source>
</reference>
<organism>
    <name type="scientific">Pongo abelii</name>
    <name type="common">Sumatran orangutan</name>
    <name type="synonym">Pongo pygmaeus abelii</name>
    <dbReference type="NCBI Taxonomy" id="9601"/>
    <lineage>
        <taxon>Eukaryota</taxon>
        <taxon>Metazoa</taxon>
        <taxon>Chordata</taxon>
        <taxon>Craniata</taxon>
        <taxon>Vertebrata</taxon>
        <taxon>Euteleostomi</taxon>
        <taxon>Mammalia</taxon>
        <taxon>Eutheria</taxon>
        <taxon>Euarchontoglires</taxon>
        <taxon>Primates</taxon>
        <taxon>Haplorrhini</taxon>
        <taxon>Catarrhini</taxon>
        <taxon>Hominidae</taxon>
        <taxon>Pongo</taxon>
    </lineage>
</organism>
<proteinExistence type="evidence at transcript level"/>
<evidence type="ECO:0000250" key="1">
    <source>
        <dbReference type="UniProtKB" id="Q68G30"/>
    </source>
</evidence>
<evidence type="ECO:0000250" key="2">
    <source>
        <dbReference type="UniProtKB" id="Q6P597"/>
    </source>
</evidence>
<evidence type="ECO:0000250" key="3">
    <source>
        <dbReference type="UniProtKB" id="Q91W40"/>
    </source>
</evidence>
<evidence type="ECO:0000255" key="4"/>
<evidence type="ECO:0000256" key="5">
    <source>
        <dbReference type="SAM" id="MobiDB-lite"/>
    </source>
</evidence>
<evidence type="ECO:0000305" key="6"/>
<sequence>MSVQVAAPGSAGLGPERLSPEELVRQTRQVVQGLEALRAEHHGLVGHLAEALAGQGPVTGLEMLEEKQQVVSHSLEAIELGLGEAQVLLALSAHVGALEAEKQRLRSQARRLAQENVWLREELEETQRRLRASEEAVAQLEEEKRHLEFLGQLRQYDPPAESQQSESPPRRDSLASLFPSEEEERKGPEAAGAAAAQQGGYEIPARLRTLHNLVIQYAGQGRYEVAVPLCRQALEDLERSSGHCHPDVATMLNILALVYRDQNKYKEATDLLHDALQIREQTLGPEHPAVAATLNNLAVLYGKRGRYREAEPLCQRALEIREKVLGADHPDVAKQLNNLALLCQNQGKFEDVERHYARALSIYEALGGPHDPNVAKTKNNLASAYLKQNKYQQAEELYKEILHKEDLPAPLGAPNTGTAGDAEQALRRSSSLSKIRESIRRGSEKLVSRLRGEGAAGAAGMKRAMSLNTLNVDAPRALGTQFPSWHLDKAPRTLSASTHDLSPH</sequence>
<gene>
    <name type="primary">KLC3</name>
</gene>
<protein>
    <recommendedName>
        <fullName>Kinesin light chain 3</fullName>
    </recommendedName>
</protein>
<comment type="function">
    <text evidence="3">Kinesin is a microtubule-associated force-producing protein that may play a role in organelle transport. Plays a role during spermiogenesis in the development of the sperm tail midpiece and in the normal function of spermatozoa (By similarity). May play a role in the formation of the mitochondrial sheath formation in the developing spermatid midpiece (By similarity).</text>
</comment>
<comment type="subunit">
    <text evidence="1 3">Oligomer composed of two heavy chains and two light chains. Associates with microtubulin in an ATP-dependent manner. Interacts with KIF5C. Interacts with ODF1. Interacts with LRGUK (By similarity). Interacts with VDAC2 (By similarity).</text>
</comment>
<comment type="subcellular location">
    <subcellularLocation>
        <location evidence="1 3">Cytoplasm</location>
        <location evidence="1 3">Cytoskeleton</location>
    </subcellularLocation>
    <subcellularLocation>
        <location evidence="3">Mitochondrion</location>
    </subcellularLocation>
    <text evidence="1 3">In elongating spermatid tail midpiece, localized in outer dense fibers (ODFs) and associates with mitochondria. Also localizes to the manchette in elongating spermatids.</text>
</comment>
<comment type="domain">
    <text evidence="1">The heptad repeat (HR) motif is sufficient for interaction with kinesin heavy (KHL) chains and ODF1. The TPR region is involved in mitochondrial binding (By similarity).</text>
</comment>
<comment type="similarity">
    <text evidence="6">Belongs to the kinesin light chain family.</text>
</comment>
<accession>Q5R8E2</accession>
<name>KLC3_PONAB</name>
<dbReference type="EMBL" id="CR859811">
    <property type="protein sequence ID" value="CAH91968.1"/>
    <property type="molecule type" value="mRNA"/>
</dbReference>
<dbReference type="RefSeq" id="NP_001126140.1">
    <property type="nucleotide sequence ID" value="NM_001132668.1"/>
</dbReference>
<dbReference type="SMR" id="Q5R8E2"/>
<dbReference type="FunCoup" id="Q5R8E2">
    <property type="interactions" value="181"/>
</dbReference>
<dbReference type="STRING" id="9601.ENSPPYP00000011315"/>
<dbReference type="GeneID" id="100173098"/>
<dbReference type="KEGG" id="pon:100173098"/>
<dbReference type="CTD" id="147700"/>
<dbReference type="eggNOG" id="KOG1840">
    <property type="taxonomic scope" value="Eukaryota"/>
</dbReference>
<dbReference type="InParanoid" id="Q5R8E2"/>
<dbReference type="OrthoDB" id="413723at2759"/>
<dbReference type="Proteomes" id="UP000001595">
    <property type="component" value="Unplaced"/>
</dbReference>
<dbReference type="GO" id="GO:0005871">
    <property type="term" value="C:kinesin complex"/>
    <property type="evidence" value="ECO:0007669"/>
    <property type="project" value="InterPro"/>
</dbReference>
<dbReference type="GO" id="GO:0005874">
    <property type="term" value="C:microtubule"/>
    <property type="evidence" value="ECO:0007669"/>
    <property type="project" value="UniProtKB-KW"/>
</dbReference>
<dbReference type="GO" id="GO:0005739">
    <property type="term" value="C:mitochondrion"/>
    <property type="evidence" value="ECO:0000250"/>
    <property type="project" value="UniProtKB"/>
</dbReference>
<dbReference type="GO" id="GO:0019894">
    <property type="term" value="F:kinesin binding"/>
    <property type="evidence" value="ECO:0007669"/>
    <property type="project" value="TreeGrafter"/>
</dbReference>
<dbReference type="GO" id="GO:0120317">
    <property type="term" value="P:sperm mitochondrial sheath assembly"/>
    <property type="evidence" value="ECO:0000250"/>
    <property type="project" value="UniProtKB"/>
</dbReference>
<dbReference type="GO" id="GO:0007286">
    <property type="term" value="P:spermatid development"/>
    <property type="evidence" value="ECO:0000250"/>
    <property type="project" value="UniProtKB"/>
</dbReference>
<dbReference type="GO" id="GO:0007283">
    <property type="term" value="P:spermatogenesis"/>
    <property type="evidence" value="ECO:0000250"/>
    <property type="project" value="UniProtKB"/>
</dbReference>
<dbReference type="FunFam" id="1.25.40.10:FF:000003">
    <property type="entry name" value="kinesin light chain isoform X1"/>
    <property type="match status" value="1"/>
</dbReference>
<dbReference type="Gene3D" id="1.25.40.10">
    <property type="entry name" value="Tetratricopeptide repeat domain"/>
    <property type="match status" value="1"/>
</dbReference>
<dbReference type="InterPro" id="IPR002151">
    <property type="entry name" value="Kinesin_light"/>
</dbReference>
<dbReference type="InterPro" id="IPR011990">
    <property type="entry name" value="TPR-like_helical_dom_sf"/>
</dbReference>
<dbReference type="InterPro" id="IPR019734">
    <property type="entry name" value="TPR_rpt"/>
</dbReference>
<dbReference type="PANTHER" id="PTHR45783">
    <property type="entry name" value="KINESIN LIGHT CHAIN"/>
    <property type="match status" value="1"/>
</dbReference>
<dbReference type="PANTHER" id="PTHR45783:SF1">
    <property type="entry name" value="KINESIN LIGHT CHAIN 3"/>
    <property type="match status" value="1"/>
</dbReference>
<dbReference type="Pfam" id="PF13424">
    <property type="entry name" value="TPR_12"/>
    <property type="match status" value="2"/>
</dbReference>
<dbReference type="PRINTS" id="PR00381">
    <property type="entry name" value="KINESINLIGHT"/>
</dbReference>
<dbReference type="SMART" id="SM00028">
    <property type="entry name" value="TPR"/>
    <property type="match status" value="4"/>
</dbReference>
<dbReference type="SUPFAM" id="SSF48452">
    <property type="entry name" value="TPR-like"/>
    <property type="match status" value="1"/>
</dbReference>
<dbReference type="PROSITE" id="PS50005">
    <property type="entry name" value="TPR"/>
    <property type="match status" value="4"/>
</dbReference>
<dbReference type="PROSITE" id="PS50293">
    <property type="entry name" value="TPR_REGION"/>
    <property type="match status" value="1"/>
</dbReference>
<keyword id="KW-0175">Coiled coil</keyword>
<keyword id="KW-0963">Cytoplasm</keyword>
<keyword id="KW-0206">Cytoskeleton</keyword>
<keyword id="KW-0221">Differentiation</keyword>
<keyword id="KW-0493">Microtubule</keyword>
<keyword id="KW-0496">Mitochondrion</keyword>
<keyword id="KW-0505">Motor protein</keyword>
<keyword id="KW-0597">Phosphoprotein</keyword>
<keyword id="KW-1185">Reference proteome</keyword>
<keyword id="KW-0677">Repeat</keyword>
<keyword id="KW-0744">Spermatogenesis</keyword>
<keyword id="KW-0802">TPR repeat</keyword>